<organism>
    <name type="scientific">Tamias obscurus</name>
    <name type="common">California chipmunk</name>
    <name type="synonym">Neotamias obscurus</name>
    <dbReference type="NCBI Taxonomy" id="123788"/>
    <lineage>
        <taxon>Eukaryota</taxon>
        <taxon>Metazoa</taxon>
        <taxon>Chordata</taxon>
        <taxon>Craniata</taxon>
        <taxon>Vertebrata</taxon>
        <taxon>Euteleostomi</taxon>
        <taxon>Mammalia</taxon>
        <taxon>Eutheria</taxon>
        <taxon>Euarchontoglires</taxon>
        <taxon>Glires</taxon>
        <taxon>Rodentia</taxon>
        <taxon>Sciuromorpha</taxon>
        <taxon>Sciuridae</taxon>
        <taxon>Xerinae</taxon>
        <taxon>Marmotini</taxon>
        <taxon>Tamias</taxon>
    </lineage>
</organism>
<accession>Q94Y56</accession>
<keyword id="KW-0249">Electron transport</keyword>
<keyword id="KW-0349">Heme</keyword>
<keyword id="KW-0408">Iron</keyword>
<keyword id="KW-0472">Membrane</keyword>
<keyword id="KW-0479">Metal-binding</keyword>
<keyword id="KW-0496">Mitochondrion</keyword>
<keyword id="KW-0999">Mitochondrion inner membrane</keyword>
<keyword id="KW-0679">Respiratory chain</keyword>
<keyword id="KW-0812">Transmembrane</keyword>
<keyword id="KW-1133">Transmembrane helix</keyword>
<keyword id="KW-0813">Transport</keyword>
<keyword id="KW-0830">Ubiquinone</keyword>
<gene>
    <name type="primary">MT-CYB</name>
    <name type="synonym">COB</name>
    <name type="synonym">CYTB</name>
    <name type="synonym">MTCYB</name>
</gene>
<reference key="1">
    <citation type="journal article" date="2001" name="Mol. Phylogenet. Evol.">
        <title>Molecular phylogeny of the chipmunks inferred from mitochondrial cytochrome b and cytochrome oxidase II gene sequences.</title>
        <authorList>
            <person name="Piaggio A.J."/>
            <person name="Spicer G.S."/>
        </authorList>
    </citation>
    <scope>NUCLEOTIDE SEQUENCE [GENOMIC DNA]</scope>
    <source>
        <strain>Isolate MSB 47429 / NK 8069</strain>
    </source>
</reference>
<name>CYB_TAMOB</name>
<comment type="function">
    <text evidence="2">Component of the ubiquinol-cytochrome c reductase complex (complex III or cytochrome b-c1 complex) that is part of the mitochondrial respiratory chain. The b-c1 complex mediates electron transfer from ubiquinol to cytochrome c. Contributes to the generation of a proton gradient across the mitochondrial membrane that is then used for ATP synthesis.</text>
</comment>
<comment type="cofactor">
    <cofactor evidence="2">
        <name>heme b</name>
        <dbReference type="ChEBI" id="CHEBI:60344"/>
    </cofactor>
    <text evidence="2">Binds 2 heme b groups non-covalently.</text>
</comment>
<comment type="subunit">
    <text evidence="2">The cytochrome bc1 complex contains 11 subunits: 3 respiratory subunits (MT-CYB, CYC1 and UQCRFS1), 2 core proteins (UQCRC1 and UQCRC2) and 6 low-molecular weight proteins (UQCRH/QCR6, UQCRB/QCR7, UQCRQ/QCR8, UQCR10/QCR9, UQCR11/QCR10 and a cleavage product of UQCRFS1). This cytochrome bc1 complex then forms a dimer.</text>
</comment>
<comment type="subcellular location">
    <subcellularLocation>
        <location evidence="2">Mitochondrion inner membrane</location>
        <topology evidence="2">Multi-pass membrane protein</topology>
    </subcellularLocation>
</comment>
<comment type="miscellaneous">
    <text evidence="1">Heme 1 (or BL or b562) is low-potential and absorbs at about 562 nm, and heme 2 (or BH or b566) is high-potential and absorbs at about 566 nm.</text>
</comment>
<comment type="similarity">
    <text evidence="3 4">Belongs to the cytochrome b family.</text>
</comment>
<comment type="caution">
    <text evidence="2">The full-length protein contains only eight transmembrane helices, not nine as predicted by bioinformatics tools.</text>
</comment>
<geneLocation type="mitochondrion"/>
<feature type="chain" id="PRO_0000061639" description="Cytochrome b">
    <location>
        <begin position="1"/>
        <end position="379"/>
    </location>
</feature>
<feature type="transmembrane region" description="Helical" evidence="2">
    <location>
        <begin position="33"/>
        <end position="53"/>
    </location>
</feature>
<feature type="transmembrane region" description="Helical" evidence="2">
    <location>
        <begin position="77"/>
        <end position="98"/>
    </location>
</feature>
<feature type="transmembrane region" description="Helical" evidence="2">
    <location>
        <begin position="113"/>
        <end position="133"/>
    </location>
</feature>
<feature type="transmembrane region" description="Helical" evidence="2">
    <location>
        <begin position="178"/>
        <end position="198"/>
    </location>
</feature>
<feature type="transmembrane region" description="Helical" evidence="2">
    <location>
        <begin position="226"/>
        <end position="246"/>
    </location>
</feature>
<feature type="transmembrane region" description="Helical" evidence="2">
    <location>
        <begin position="288"/>
        <end position="308"/>
    </location>
</feature>
<feature type="transmembrane region" description="Helical" evidence="2">
    <location>
        <begin position="320"/>
        <end position="340"/>
    </location>
</feature>
<feature type="transmembrane region" description="Helical" evidence="2">
    <location>
        <begin position="347"/>
        <end position="367"/>
    </location>
</feature>
<feature type="binding site" description="axial binding residue" evidence="2">
    <location>
        <position position="83"/>
    </location>
    <ligand>
        <name>heme b</name>
        <dbReference type="ChEBI" id="CHEBI:60344"/>
        <label>b562</label>
    </ligand>
    <ligandPart>
        <name>Fe</name>
        <dbReference type="ChEBI" id="CHEBI:18248"/>
    </ligandPart>
</feature>
<feature type="binding site" description="axial binding residue" evidence="2">
    <location>
        <position position="97"/>
    </location>
    <ligand>
        <name>heme b</name>
        <dbReference type="ChEBI" id="CHEBI:60344"/>
        <label>b566</label>
    </ligand>
    <ligandPart>
        <name>Fe</name>
        <dbReference type="ChEBI" id="CHEBI:18248"/>
    </ligandPart>
</feature>
<feature type="binding site" description="axial binding residue" evidence="2">
    <location>
        <position position="182"/>
    </location>
    <ligand>
        <name>heme b</name>
        <dbReference type="ChEBI" id="CHEBI:60344"/>
        <label>b562</label>
    </ligand>
    <ligandPart>
        <name>Fe</name>
        <dbReference type="ChEBI" id="CHEBI:18248"/>
    </ligandPart>
</feature>
<feature type="binding site" description="axial binding residue" evidence="2">
    <location>
        <position position="196"/>
    </location>
    <ligand>
        <name>heme b</name>
        <dbReference type="ChEBI" id="CHEBI:60344"/>
        <label>b566</label>
    </ligand>
    <ligandPart>
        <name>Fe</name>
        <dbReference type="ChEBI" id="CHEBI:18248"/>
    </ligandPart>
</feature>
<feature type="binding site" evidence="2">
    <location>
        <position position="201"/>
    </location>
    <ligand>
        <name>a ubiquinone</name>
        <dbReference type="ChEBI" id="CHEBI:16389"/>
    </ligand>
</feature>
<proteinExistence type="inferred from homology"/>
<protein>
    <recommendedName>
        <fullName>Cytochrome b</fullName>
    </recommendedName>
    <alternativeName>
        <fullName>Complex III subunit 3</fullName>
    </alternativeName>
    <alternativeName>
        <fullName>Complex III subunit III</fullName>
    </alternativeName>
    <alternativeName>
        <fullName>Cytochrome b-c1 complex subunit 3</fullName>
    </alternativeName>
    <alternativeName>
        <fullName>Ubiquinol-cytochrome-c reductase complex cytochrome b subunit</fullName>
    </alternativeName>
</protein>
<evidence type="ECO:0000250" key="1"/>
<evidence type="ECO:0000250" key="2">
    <source>
        <dbReference type="UniProtKB" id="P00157"/>
    </source>
</evidence>
<evidence type="ECO:0000255" key="3">
    <source>
        <dbReference type="PROSITE-ProRule" id="PRU00967"/>
    </source>
</evidence>
<evidence type="ECO:0000255" key="4">
    <source>
        <dbReference type="PROSITE-ProRule" id="PRU00968"/>
    </source>
</evidence>
<sequence length="379" mass="43055">MTNIRKTHPLIKIINHSFIDLPAPSNISAWWNFGSLLGICLIIQILTGLFLAMHYTSDTMTAFSSVTHICRDVNYGWLIRYMHANGASMFFICLFLHVGRGLYYGSYTYFETWNIGVILLFAVMATAFMGYVLPWGQMSFWGATVITNLLSAIPYIGTTLVEWIWGGFSVDKATLTRFFAFHFILPFIITALVMVHLLFLHETGSNNPSGLISDSDKIPFHPYYTIKDILGILLLILALMTLVLFSPDLLGDPDNYTPANPLNTPPHIKPEWYFLFAYAILRSIPNKLGGVLALALSILILMLFPILHMSKQRSMMFRPLSQCMFWILVADLFTLTWIGGQPVEYPFIIIGQLASILYFMIILLILPVISLFENKLLKW</sequence>
<dbReference type="EMBL" id="AF147652">
    <property type="protein sequence ID" value="AAL14051.1"/>
    <property type="molecule type" value="Genomic_DNA"/>
</dbReference>
<dbReference type="SMR" id="Q94Y56"/>
<dbReference type="GO" id="GO:0005743">
    <property type="term" value="C:mitochondrial inner membrane"/>
    <property type="evidence" value="ECO:0007669"/>
    <property type="project" value="UniProtKB-SubCell"/>
</dbReference>
<dbReference type="GO" id="GO:0045275">
    <property type="term" value="C:respiratory chain complex III"/>
    <property type="evidence" value="ECO:0007669"/>
    <property type="project" value="InterPro"/>
</dbReference>
<dbReference type="GO" id="GO:0046872">
    <property type="term" value="F:metal ion binding"/>
    <property type="evidence" value="ECO:0007669"/>
    <property type="project" value="UniProtKB-KW"/>
</dbReference>
<dbReference type="GO" id="GO:0008121">
    <property type="term" value="F:ubiquinol-cytochrome-c reductase activity"/>
    <property type="evidence" value="ECO:0007669"/>
    <property type="project" value="InterPro"/>
</dbReference>
<dbReference type="GO" id="GO:0006122">
    <property type="term" value="P:mitochondrial electron transport, ubiquinol to cytochrome c"/>
    <property type="evidence" value="ECO:0007669"/>
    <property type="project" value="TreeGrafter"/>
</dbReference>
<dbReference type="CDD" id="cd00290">
    <property type="entry name" value="cytochrome_b_C"/>
    <property type="match status" value="1"/>
</dbReference>
<dbReference type="CDD" id="cd00284">
    <property type="entry name" value="Cytochrome_b_N"/>
    <property type="match status" value="1"/>
</dbReference>
<dbReference type="FunFam" id="1.20.810.10:FF:000002">
    <property type="entry name" value="Cytochrome b"/>
    <property type="match status" value="1"/>
</dbReference>
<dbReference type="Gene3D" id="1.20.810.10">
    <property type="entry name" value="Cytochrome Bc1 Complex, Chain C"/>
    <property type="match status" value="1"/>
</dbReference>
<dbReference type="InterPro" id="IPR005798">
    <property type="entry name" value="Cyt_b/b6_C"/>
</dbReference>
<dbReference type="InterPro" id="IPR036150">
    <property type="entry name" value="Cyt_b/b6_C_sf"/>
</dbReference>
<dbReference type="InterPro" id="IPR005797">
    <property type="entry name" value="Cyt_b/b6_N"/>
</dbReference>
<dbReference type="InterPro" id="IPR027387">
    <property type="entry name" value="Cytb/b6-like_sf"/>
</dbReference>
<dbReference type="InterPro" id="IPR030689">
    <property type="entry name" value="Cytochrome_b"/>
</dbReference>
<dbReference type="InterPro" id="IPR048260">
    <property type="entry name" value="Cytochrome_b_C_euk/bac"/>
</dbReference>
<dbReference type="InterPro" id="IPR048259">
    <property type="entry name" value="Cytochrome_b_N_euk/bac"/>
</dbReference>
<dbReference type="InterPro" id="IPR016174">
    <property type="entry name" value="Di-haem_cyt_TM"/>
</dbReference>
<dbReference type="PANTHER" id="PTHR19271">
    <property type="entry name" value="CYTOCHROME B"/>
    <property type="match status" value="1"/>
</dbReference>
<dbReference type="PANTHER" id="PTHR19271:SF16">
    <property type="entry name" value="CYTOCHROME B"/>
    <property type="match status" value="1"/>
</dbReference>
<dbReference type="Pfam" id="PF00032">
    <property type="entry name" value="Cytochrom_B_C"/>
    <property type="match status" value="1"/>
</dbReference>
<dbReference type="Pfam" id="PF00033">
    <property type="entry name" value="Cytochrome_B"/>
    <property type="match status" value="1"/>
</dbReference>
<dbReference type="PIRSF" id="PIRSF038885">
    <property type="entry name" value="COB"/>
    <property type="match status" value="1"/>
</dbReference>
<dbReference type="SUPFAM" id="SSF81648">
    <property type="entry name" value="a domain/subunit of cytochrome bc1 complex (Ubiquinol-cytochrome c reductase)"/>
    <property type="match status" value="1"/>
</dbReference>
<dbReference type="SUPFAM" id="SSF81342">
    <property type="entry name" value="Transmembrane di-heme cytochromes"/>
    <property type="match status" value="1"/>
</dbReference>
<dbReference type="PROSITE" id="PS51003">
    <property type="entry name" value="CYTB_CTER"/>
    <property type="match status" value="1"/>
</dbReference>
<dbReference type="PROSITE" id="PS51002">
    <property type="entry name" value="CYTB_NTER"/>
    <property type="match status" value="1"/>
</dbReference>